<gene>
    <name evidence="1" type="primary">rpmG</name>
    <name type="ordered locus">SPD_1964</name>
</gene>
<sequence>MRVNITLEHKESGERLYLTSKNKRNTPDRLQLKKYSPKLRKHVVFTEVK</sequence>
<keyword id="KW-1185">Reference proteome</keyword>
<keyword id="KW-0687">Ribonucleoprotein</keyword>
<keyword id="KW-0689">Ribosomal protein</keyword>
<accession>Q04I36</accession>
<feature type="chain" id="PRO_0000356715" description="Large ribosomal subunit protein bL33">
    <location>
        <begin position="1"/>
        <end position="49"/>
    </location>
</feature>
<proteinExistence type="inferred from homology"/>
<dbReference type="EMBL" id="CP000410">
    <property type="protein sequence ID" value="ABJ55204.1"/>
    <property type="molecule type" value="Genomic_DNA"/>
</dbReference>
<dbReference type="RefSeq" id="WP_001265622.1">
    <property type="nucleotide sequence ID" value="NZ_JAMLJR010000012.1"/>
</dbReference>
<dbReference type="SMR" id="Q04I36"/>
<dbReference type="PaxDb" id="373153-SPD_1964"/>
<dbReference type="GeneID" id="98394265"/>
<dbReference type="KEGG" id="spd:SPD_1964"/>
<dbReference type="eggNOG" id="COG0267">
    <property type="taxonomic scope" value="Bacteria"/>
</dbReference>
<dbReference type="HOGENOM" id="CLU_190949_3_2_9"/>
<dbReference type="BioCyc" id="SPNE373153:G1G6V-2110-MONOMER"/>
<dbReference type="Proteomes" id="UP000001452">
    <property type="component" value="Chromosome"/>
</dbReference>
<dbReference type="GO" id="GO:0005737">
    <property type="term" value="C:cytoplasm"/>
    <property type="evidence" value="ECO:0007669"/>
    <property type="project" value="UniProtKB-ARBA"/>
</dbReference>
<dbReference type="GO" id="GO:1990904">
    <property type="term" value="C:ribonucleoprotein complex"/>
    <property type="evidence" value="ECO:0007669"/>
    <property type="project" value="UniProtKB-KW"/>
</dbReference>
<dbReference type="GO" id="GO:0005840">
    <property type="term" value="C:ribosome"/>
    <property type="evidence" value="ECO:0007669"/>
    <property type="project" value="UniProtKB-KW"/>
</dbReference>
<dbReference type="GO" id="GO:0003735">
    <property type="term" value="F:structural constituent of ribosome"/>
    <property type="evidence" value="ECO:0007669"/>
    <property type="project" value="InterPro"/>
</dbReference>
<dbReference type="GO" id="GO:0006412">
    <property type="term" value="P:translation"/>
    <property type="evidence" value="ECO:0007669"/>
    <property type="project" value="UniProtKB-UniRule"/>
</dbReference>
<dbReference type="Gene3D" id="2.20.28.120">
    <property type="entry name" value="Ribosomal protein L33"/>
    <property type="match status" value="1"/>
</dbReference>
<dbReference type="HAMAP" id="MF_00294">
    <property type="entry name" value="Ribosomal_bL33"/>
    <property type="match status" value="1"/>
</dbReference>
<dbReference type="InterPro" id="IPR001705">
    <property type="entry name" value="Ribosomal_bL33"/>
</dbReference>
<dbReference type="InterPro" id="IPR018264">
    <property type="entry name" value="Ribosomal_bL33_CS"/>
</dbReference>
<dbReference type="InterPro" id="IPR038584">
    <property type="entry name" value="Ribosomal_bL33_sf"/>
</dbReference>
<dbReference type="InterPro" id="IPR011332">
    <property type="entry name" value="Ribosomal_zn-bd"/>
</dbReference>
<dbReference type="NCBIfam" id="NF001764">
    <property type="entry name" value="PRK00504.1"/>
    <property type="match status" value="1"/>
</dbReference>
<dbReference type="NCBIfam" id="NF001860">
    <property type="entry name" value="PRK00595.1"/>
    <property type="match status" value="1"/>
</dbReference>
<dbReference type="NCBIfam" id="TIGR01023">
    <property type="entry name" value="rpmG_bact"/>
    <property type="match status" value="1"/>
</dbReference>
<dbReference type="PANTHER" id="PTHR43168">
    <property type="entry name" value="50S RIBOSOMAL PROTEIN L33, CHLOROPLASTIC"/>
    <property type="match status" value="1"/>
</dbReference>
<dbReference type="PANTHER" id="PTHR43168:SF2">
    <property type="entry name" value="LARGE RIBOSOMAL SUBUNIT PROTEIN BL33C"/>
    <property type="match status" value="1"/>
</dbReference>
<dbReference type="Pfam" id="PF00471">
    <property type="entry name" value="Ribosomal_L33"/>
    <property type="match status" value="1"/>
</dbReference>
<dbReference type="SUPFAM" id="SSF57829">
    <property type="entry name" value="Zn-binding ribosomal proteins"/>
    <property type="match status" value="1"/>
</dbReference>
<dbReference type="PROSITE" id="PS00582">
    <property type="entry name" value="RIBOSOMAL_L33"/>
    <property type="match status" value="1"/>
</dbReference>
<comment type="similarity">
    <text evidence="1">Belongs to the bacterial ribosomal protein bL33 family.</text>
</comment>
<protein>
    <recommendedName>
        <fullName evidence="1">Large ribosomal subunit protein bL33</fullName>
    </recommendedName>
    <alternativeName>
        <fullName evidence="2">50S ribosomal protein L33</fullName>
    </alternativeName>
</protein>
<organism>
    <name type="scientific">Streptococcus pneumoniae serotype 2 (strain D39 / NCTC 7466)</name>
    <dbReference type="NCBI Taxonomy" id="373153"/>
    <lineage>
        <taxon>Bacteria</taxon>
        <taxon>Bacillati</taxon>
        <taxon>Bacillota</taxon>
        <taxon>Bacilli</taxon>
        <taxon>Lactobacillales</taxon>
        <taxon>Streptococcaceae</taxon>
        <taxon>Streptococcus</taxon>
    </lineage>
</organism>
<evidence type="ECO:0000255" key="1">
    <source>
        <dbReference type="HAMAP-Rule" id="MF_00294"/>
    </source>
</evidence>
<evidence type="ECO:0000305" key="2"/>
<reference key="1">
    <citation type="journal article" date="2007" name="J. Bacteriol.">
        <title>Genome sequence of Avery's virulent serotype 2 strain D39 of Streptococcus pneumoniae and comparison with that of unencapsulated laboratory strain R6.</title>
        <authorList>
            <person name="Lanie J.A."/>
            <person name="Ng W.-L."/>
            <person name="Kazmierczak K.M."/>
            <person name="Andrzejewski T.M."/>
            <person name="Davidsen T.M."/>
            <person name="Wayne K.J."/>
            <person name="Tettelin H."/>
            <person name="Glass J.I."/>
            <person name="Winkler M.E."/>
        </authorList>
    </citation>
    <scope>NUCLEOTIDE SEQUENCE [LARGE SCALE GENOMIC DNA]</scope>
    <source>
        <strain>D39 / NCTC 7466</strain>
    </source>
</reference>
<name>RL33_STRP2</name>